<reference key="1">
    <citation type="journal article" date="2008" name="J. Bacteriol.">
        <title>The pangenome structure of Escherichia coli: comparative genomic analysis of E. coli commensal and pathogenic isolates.</title>
        <authorList>
            <person name="Rasko D.A."/>
            <person name="Rosovitz M.J."/>
            <person name="Myers G.S.A."/>
            <person name="Mongodin E.F."/>
            <person name="Fricke W.F."/>
            <person name="Gajer P."/>
            <person name="Crabtree J."/>
            <person name="Sebaihia M."/>
            <person name="Thomson N.R."/>
            <person name="Chaudhuri R."/>
            <person name="Henderson I.R."/>
            <person name="Sperandio V."/>
            <person name="Ravel J."/>
        </authorList>
    </citation>
    <scope>NUCLEOTIDE SEQUENCE [LARGE SCALE GENOMIC DNA]</scope>
    <source>
        <strain>HS</strain>
    </source>
</reference>
<protein>
    <recommendedName>
        <fullName evidence="1">Cell division protein FtsB</fullName>
    </recommendedName>
</protein>
<dbReference type="EMBL" id="CP000802">
    <property type="protein sequence ID" value="ABV07131.1"/>
    <property type="molecule type" value="Genomic_DNA"/>
</dbReference>
<dbReference type="RefSeq" id="WP_000517476.1">
    <property type="nucleotide sequence ID" value="NC_009800.1"/>
</dbReference>
<dbReference type="SMR" id="A8A3M7"/>
<dbReference type="GeneID" id="93779258"/>
<dbReference type="KEGG" id="ecx:EcHS_A2886"/>
<dbReference type="HOGENOM" id="CLU_134863_5_2_6"/>
<dbReference type="GO" id="GO:0032153">
    <property type="term" value="C:cell division site"/>
    <property type="evidence" value="ECO:0007669"/>
    <property type="project" value="UniProtKB-UniRule"/>
</dbReference>
<dbReference type="GO" id="GO:0030428">
    <property type="term" value="C:cell septum"/>
    <property type="evidence" value="ECO:0007669"/>
    <property type="project" value="TreeGrafter"/>
</dbReference>
<dbReference type="GO" id="GO:0005886">
    <property type="term" value="C:plasma membrane"/>
    <property type="evidence" value="ECO:0007669"/>
    <property type="project" value="UniProtKB-SubCell"/>
</dbReference>
<dbReference type="GO" id="GO:0043093">
    <property type="term" value="P:FtsZ-dependent cytokinesis"/>
    <property type="evidence" value="ECO:0007669"/>
    <property type="project" value="UniProtKB-UniRule"/>
</dbReference>
<dbReference type="FunFam" id="1.20.5.400:FF:000001">
    <property type="entry name" value="Cell division protein FtsB"/>
    <property type="match status" value="1"/>
</dbReference>
<dbReference type="Gene3D" id="1.20.5.400">
    <property type="match status" value="1"/>
</dbReference>
<dbReference type="HAMAP" id="MF_00599">
    <property type="entry name" value="FtsB"/>
    <property type="match status" value="1"/>
</dbReference>
<dbReference type="InterPro" id="IPR023081">
    <property type="entry name" value="Cell_div_FtsB"/>
</dbReference>
<dbReference type="InterPro" id="IPR007060">
    <property type="entry name" value="FtsL/DivIC"/>
</dbReference>
<dbReference type="NCBIfam" id="NF002058">
    <property type="entry name" value="PRK00888.1"/>
    <property type="match status" value="1"/>
</dbReference>
<dbReference type="PANTHER" id="PTHR37485">
    <property type="entry name" value="CELL DIVISION PROTEIN FTSB"/>
    <property type="match status" value="1"/>
</dbReference>
<dbReference type="PANTHER" id="PTHR37485:SF1">
    <property type="entry name" value="CELL DIVISION PROTEIN FTSB"/>
    <property type="match status" value="1"/>
</dbReference>
<dbReference type="Pfam" id="PF04977">
    <property type="entry name" value="DivIC"/>
    <property type="match status" value="1"/>
</dbReference>
<accession>A8A3M7</accession>
<sequence length="103" mass="11622">MGKLTLLLLAILVWLQYSLWFGKNGIHDYTRVNDDVAAQQATNAKLKARNDQLFAEIDDLNGGQEALEERARNELSMTRPGETFYRLVPDASKRAQSAGQNNR</sequence>
<evidence type="ECO:0000255" key="1">
    <source>
        <dbReference type="HAMAP-Rule" id="MF_00599"/>
    </source>
</evidence>
<organism>
    <name type="scientific">Escherichia coli O9:H4 (strain HS)</name>
    <dbReference type="NCBI Taxonomy" id="331112"/>
    <lineage>
        <taxon>Bacteria</taxon>
        <taxon>Pseudomonadati</taxon>
        <taxon>Pseudomonadota</taxon>
        <taxon>Gammaproteobacteria</taxon>
        <taxon>Enterobacterales</taxon>
        <taxon>Enterobacteriaceae</taxon>
        <taxon>Escherichia</taxon>
    </lineage>
</organism>
<proteinExistence type="inferred from homology"/>
<keyword id="KW-0131">Cell cycle</keyword>
<keyword id="KW-0132">Cell division</keyword>
<keyword id="KW-0997">Cell inner membrane</keyword>
<keyword id="KW-1003">Cell membrane</keyword>
<keyword id="KW-0175">Coiled coil</keyword>
<keyword id="KW-0472">Membrane</keyword>
<keyword id="KW-0812">Transmembrane</keyword>
<keyword id="KW-1133">Transmembrane helix</keyword>
<feature type="chain" id="PRO_1000061246" description="Cell division protein FtsB">
    <location>
        <begin position="1"/>
        <end position="103"/>
    </location>
</feature>
<feature type="topological domain" description="Cytoplasmic" evidence="1">
    <location>
        <begin position="1"/>
        <end position="3"/>
    </location>
</feature>
<feature type="transmembrane region" description="Helical" evidence="1">
    <location>
        <begin position="4"/>
        <end position="21"/>
    </location>
</feature>
<feature type="topological domain" description="Periplasmic" evidence="1">
    <location>
        <begin position="22"/>
        <end position="103"/>
    </location>
</feature>
<feature type="coiled-coil region" evidence="1">
    <location>
        <begin position="31"/>
        <end position="71"/>
    </location>
</feature>
<name>FTSB_ECOHS</name>
<comment type="function">
    <text evidence="1">Essential cell division protein. May link together the upstream cell division proteins, which are predominantly cytoplasmic, with the downstream cell division proteins, which are predominantly periplasmic.</text>
</comment>
<comment type="subunit">
    <text evidence="1">Part of a complex composed of FtsB, FtsL and FtsQ.</text>
</comment>
<comment type="subcellular location">
    <subcellularLocation>
        <location evidence="1">Cell inner membrane</location>
        <topology evidence="1">Single-pass type II membrane protein</topology>
    </subcellularLocation>
    <text evidence="1">Localizes to the division septum.</text>
</comment>
<comment type="similarity">
    <text evidence="1">Belongs to the FtsB family.</text>
</comment>
<gene>
    <name evidence="1" type="primary">ftsB</name>
    <name type="ordered locus">EcHS_A2886</name>
</gene>